<gene>
    <name evidence="1" type="primary">rny</name>
    <name type="ordered locus">aq_1732</name>
</gene>
<accession>O67622</accession>
<proteinExistence type="inferred from homology"/>
<organism>
    <name type="scientific">Aquifex aeolicus (strain VF5)</name>
    <dbReference type="NCBI Taxonomy" id="224324"/>
    <lineage>
        <taxon>Bacteria</taxon>
        <taxon>Pseudomonadati</taxon>
        <taxon>Aquificota</taxon>
        <taxon>Aquificia</taxon>
        <taxon>Aquificales</taxon>
        <taxon>Aquificaceae</taxon>
        <taxon>Aquifex</taxon>
    </lineage>
</organism>
<reference key="1">
    <citation type="journal article" date="1998" name="Nature">
        <title>The complete genome of the hyperthermophilic bacterium Aquifex aeolicus.</title>
        <authorList>
            <person name="Deckert G."/>
            <person name="Warren P.V."/>
            <person name="Gaasterland T."/>
            <person name="Young W.G."/>
            <person name="Lenox A.L."/>
            <person name="Graham D.E."/>
            <person name="Overbeek R."/>
            <person name="Snead M.A."/>
            <person name="Keller M."/>
            <person name="Aujay M."/>
            <person name="Huber R."/>
            <person name="Feldman R.A."/>
            <person name="Short J.M."/>
            <person name="Olsen G.J."/>
            <person name="Swanson R.V."/>
        </authorList>
    </citation>
    <scope>NUCLEOTIDE SEQUENCE [LARGE SCALE GENOMIC DNA]</scope>
    <source>
        <strain>VF5</strain>
    </source>
</reference>
<feature type="chain" id="PRO_0000163763" description="Ribonuclease Y">
    <location>
        <begin position="1"/>
        <end position="558"/>
    </location>
</feature>
<feature type="transmembrane region" description="Helical" evidence="1">
    <location>
        <begin position="3"/>
        <end position="23"/>
    </location>
</feature>
<feature type="domain" description="KH" evidence="1">
    <location>
        <begin position="248"/>
        <end position="311"/>
    </location>
</feature>
<feature type="domain" description="HD" evidence="2">
    <location>
        <begin position="374"/>
        <end position="467"/>
    </location>
</feature>
<sequence length="558" mass="64329">MDVLSILLILVAVGVGIFVGRQFLGQKQAPAPTYQPVPSPQILEEAKSKAEEIIKEAKEKAEVILKEAKESAEKIVREAEEKAEKLIREAKEEVERIKEEVERRKKELKEREENVLAKERHLDRRWEALEKREEELLHRERELKDFERSLERWRDEIRHKEEELKHMKEEVEELKKKELEELQRIAKLTLEEARQEIIKKVEEEAKKDAVKLMKVIEEDAKRRAEFEAKKIIATATQRLAPQIAVNYTTTTVELPSNEFKGRIIGREGRNIRTFEILTGVDLIIDDTPDIVTISSFDPLRREIAKEALQRLIADGRIHPARIEEVVDEVKREFDEKIRKIGEETVYELDLHDINPGLYYYIGKLYFRTSYSQNVLLHSKEVAYIAGLMAEELGLDAKLARRAGLLHDIGKAISHELGGSHTDIGVELARKYGEPDAVINAIRAHHEEEPVRYPEVALVCAADALSAARPGARRETLEAYIRRLEKLEEIVKSFKGVANAYAVQAGREVRVIVNPEEISDEEAYLLSKEIPKKIEEELDFPGQIKVVVIRETRHVEYAK</sequence>
<keyword id="KW-1003">Cell membrane</keyword>
<keyword id="KW-0255">Endonuclease</keyword>
<keyword id="KW-0378">Hydrolase</keyword>
<keyword id="KW-0472">Membrane</keyword>
<keyword id="KW-0540">Nuclease</keyword>
<keyword id="KW-1185">Reference proteome</keyword>
<keyword id="KW-0694">RNA-binding</keyword>
<keyword id="KW-0812">Transmembrane</keyword>
<keyword id="KW-1133">Transmembrane helix</keyword>
<protein>
    <recommendedName>
        <fullName evidence="1">Ribonuclease Y</fullName>
        <shortName evidence="1">RNase Y</shortName>
        <ecNumber evidence="1">3.1.-.-</ecNumber>
    </recommendedName>
</protein>
<evidence type="ECO:0000255" key="1">
    <source>
        <dbReference type="HAMAP-Rule" id="MF_00335"/>
    </source>
</evidence>
<evidence type="ECO:0000255" key="2">
    <source>
        <dbReference type="PROSITE-ProRule" id="PRU01175"/>
    </source>
</evidence>
<name>RNY_AQUAE</name>
<dbReference type="EC" id="3.1.-.-" evidence="1"/>
<dbReference type="EMBL" id="AE000657">
    <property type="protein sequence ID" value="AAC07588.1"/>
    <property type="molecule type" value="Genomic_DNA"/>
</dbReference>
<dbReference type="PIR" id="D70449">
    <property type="entry name" value="D70449"/>
</dbReference>
<dbReference type="RefSeq" id="NP_214188.1">
    <property type="nucleotide sequence ID" value="NC_000918.1"/>
</dbReference>
<dbReference type="RefSeq" id="WP_010881125.1">
    <property type="nucleotide sequence ID" value="NC_000918.1"/>
</dbReference>
<dbReference type="SMR" id="O67622"/>
<dbReference type="STRING" id="224324.aq_1732"/>
<dbReference type="EnsemblBacteria" id="AAC07588">
    <property type="protein sequence ID" value="AAC07588"/>
    <property type="gene ID" value="aq_1732"/>
</dbReference>
<dbReference type="KEGG" id="aae:aq_1732"/>
<dbReference type="PATRIC" id="fig|224324.8.peg.1335"/>
<dbReference type="eggNOG" id="COG1418">
    <property type="taxonomic scope" value="Bacteria"/>
</dbReference>
<dbReference type="eggNOG" id="COG3599">
    <property type="taxonomic scope" value="Bacteria"/>
</dbReference>
<dbReference type="HOGENOM" id="CLU_028328_1_0_0"/>
<dbReference type="InParanoid" id="O67622"/>
<dbReference type="OrthoDB" id="9803205at2"/>
<dbReference type="Proteomes" id="UP000000798">
    <property type="component" value="Chromosome"/>
</dbReference>
<dbReference type="GO" id="GO:0005886">
    <property type="term" value="C:plasma membrane"/>
    <property type="evidence" value="ECO:0007669"/>
    <property type="project" value="UniProtKB-SubCell"/>
</dbReference>
<dbReference type="GO" id="GO:0003723">
    <property type="term" value="F:RNA binding"/>
    <property type="evidence" value="ECO:0007669"/>
    <property type="project" value="UniProtKB-UniRule"/>
</dbReference>
<dbReference type="GO" id="GO:0004521">
    <property type="term" value="F:RNA endonuclease activity"/>
    <property type="evidence" value="ECO:0007669"/>
    <property type="project" value="UniProtKB-UniRule"/>
</dbReference>
<dbReference type="GO" id="GO:0006402">
    <property type="term" value="P:mRNA catabolic process"/>
    <property type="evidence" value="ECO:0007669"/>
    <property type="project" value="UniProtKB-UniRule"/>
</dbReference>
<dbReference type="CDD" id="cd06503">
    <property type="entry name" value="ATP-synt_Fo_b"/>
    <property type="match status" value="1"/>
</dbReference>
<dbReference type="CDD" id="cd00077">
    <property type="entry name" value="HDc"/>
    <property type="match status" value="1"/>
</dbReference>
<dbReference type="CDD" id="cd22431">
    <property type="entry name" value="KH-I_RNaseY"/>
    <property type="match status" value="1"/>
</dbReference>
<dbReference type="FunFam" id="1.10.3210.10:FF:000022">
    <property type="entry name" value="Ribonuclease Y"/>
    <property type="match status" value="1"/>
</dbReference>
<dbReference type="Gene3D" id="1.20.5.620">
    <property type="entry name" value="F1F0 ATP synthase subunit B, membrane domain"/>
    <property type="match status" value="1"/>
</dbReference>
<dbReference type="Gene3D" id="1.10.3210.10">
    <property type="entry name" value="Hypothetical protein af1432"/>
    <property type="match status" value="1"/>
</dbReference>
<dbReference type="Gene3D" id="3.30.1370.10">
    <property type="entry name" value="K Homology domain, type 1"/>
    <property type="match status" value="1"/>
</dbReference>
<dbReference type="HAMAP" id="MF_00335">
    <property type="entry name" value="RNase_Y"/>
    <property type="match status" value="1"/>
</dbReference>
<dbReference type="InterPro" id="IPR003607">
    <property type="entry name" value="HD/PDEase_dom"/>
</dbReference>
<dbReference type="InterPro" id="IPR006674">
    <property type="entry name" value="HD_domain"/>
</dbReference>
<dbReference type="InterPro" id="IPR006675">
    <property type="entry name" value="HDIG_dom"/>
</dbReference>
<dbReference type="InterPro" id="IPR004087">
    <property type="entry name" value="KH_dom"/>
</dbReference>
<dbReference type="InterPro" id="IPR004088">
    <property type="entry name" value="KH_dom_type_1"/>
</dbReference>
<dbReference type="InterPro" id="IPR036612">
    <property type="entry name" value="KH_dom_type_1_sf"/>
</dbReference>
<dbReference type="InterPro" id="IPR017705">
    <property type="entry name" value="Ribonuclease_Y"/>
</dbReference>
<dbReference type="InterPro" id="IPR022711">
    <property type="entry name" value="RNase_Y_N"/>
</dbReference>
<dbReference type="NCBIfam" id="TIGR00277">
    <property type="entry name" value="HDIG"/>
    <property type="match status" value="1"/>
</dbReference>
<dbReference type="NCBIfam" id="TIGR03319">
    <property type="entry name" value="RNase_Y"/>
    <property type="match status" value="1"/>
</dbReference>
<dbReference type="PANTHER" id="PTHR12826">
    <property type="entry name" value="RIBONUCLEASE Y"/>
    <property type="match status" value="1"/>
</dbReference>
<dbReference type="PANTHER" id="PTHR12826:SF15">
    <property type="entry name" value="RIBONUCLEASE Y"/>
    <property type="match status" value="1"/>
</dbReference>
<dbReference type="Pfam" id="PF01966">
    <property type="entry name" value="HD"/>
    <property type="match status" value="1"/>
</dbReference>
<dbReference type="Pfam" id="PF00013">
    <property type="entry name" value="KH_1"/>
    <property type="match status" value="1"/>
</dbReference>
<dbReference type="Pfam" id="PF12072">
    <property type="entry name" value="RNase_Y_N"/>
    <property type="match status" value="1"/>
</dbReference>
<dbReference type="SMART" id="SM00471">
    <property type="entry name" value="HDc"/>
    <property type="match status" value="1"/>
</dbReference>
<dbReference type="SMART" id="SM00322">
    <property type="entry name" value="KH"/>
    <property type="match status" value="1"/>
</dbReference>
<dbReference type="SUPFAM" id="SSF54791">
    <property type="entry name" value="Eukaryotic type KH-domain (KH-domain type I)"/>
    <property type="match status" value="1"/>
</dbReference>
<dbReference type="SUPFAM" id="SSF109604">
    <property type="entry name" value="HD-domain/PDEase-like"/>
    <property type="match status" value="1"/>
</dbReference>
<dbReference type="PROSITE" id="PS51831">
    <property type="entry name" value="HD"/>
    <property type="match status" value="1"/>
</dbReference>
<dbReference type="PROSITE" id="PS50084">
    <property type="entry name" value="KH_TYPE_1"/>
    <property type="match status" value="1"/>
</dbReference>
<comment type="function">
    <text evidence="1">Endoribonuclease that initiates mRNA decay.</text>
</comment>
<comment type="subcellular location">
    <subcellularLocation>
        <location evidence="1">Cell membrane</location>
        <topology evidence="1">Single-pass membrane protein</topology>
    </subcellularLocation>
</comment>
<comment type="similarity">
    <text evidence="1">Belongs to the RNase Y family.</text>
</comment>